<evidence type="ECO:0000250" key="1"/>
<evidence type="ECO:0000305" key="2"/>
<evidence type="ECO:0000305" key="3">
    <source>
    </source>
</evidence>
<name>PROBJ_OLEEU</name>
<organism>
    <name type="scientific">Olea europaea</name>
    <name type="common">Common olive</name>
    <dbReference type="NCBI Taxonomy" id="4146"/>
    <lineage>
        <taxon>Eukaryota</taxon>
        <taxon>Viridiplantae</taxon>
        <taxon>Streptophyta</taxon>
        <taxon>Embryophyta</taxon>
        <taxon>Tracheophyta</taxon>
        <taxon>Spermatophyta</taxon>
        <taxon>Magnoliopsida</taxon>
        <taxon>eudicotyledons</taxon>
        <taxon>Gunneridae</taxon>
        <taxon>Pentapetalae</taxon>
        <taxon>asterids</taxon>
        <taxon>lamiids</taxon>
        <taxon>Lamiales</taxon>
        <taxon>Oleaceae</taxon>
        <taxon>Oleeae</taxon>
        <taxon>Olea</taxon>
    </lineage>
</organism>
<accession>A4GDU0</accession>
<proteinExistence type="evidence at protein level"/>
<sequence>MSWQTYVDDHLMCDIEGHEGHRLTAAAIVGHDGSVWAQSATFPQFKPEEMNGIMTDFNEPGHLAPTGLHLGGTKYMVIQGEAGAVTRGKKGTGGITIKKTGQALVFGIYEEPVTPGQCNMVVGRLGDYLLEQGL</sequence>
<dbReference type="EMBL" id="DQ138358">
    <property type="protein sequence ID" value="AAZ30436.1"/>
    <property type="molecule type" value="mRNA"/>
</dbReference>
<dbReference type="SMR" id="A4GDU0"/>
<dbReference type="Allergome" id="490">
    <property type="allergen name" value="Ole e 2"/>
</dbReference>
<dbReference type="GO" id="GO:0005938">
    <property type="term" value="C:cell cortex"/>
    <property type="evidence" value="ECO:0007669"/>
    <property type="project" value="TreeGrafter"/>
</dbReference>
<dbReference type="GO" id="GO:0005856">
    <property type="term" value="C:cytoskeleton"/>
    <property type="evidence" value="ECO:0007669"/>
    <property type="project" value="UniProtKB-SubCell"/>
</dbReference>
<dbReference type="GO" id="GO:0003785">
    <property type="term" value="F:actin monomer binding"/>
    <property type="evidence" value="ECO:0007669"/>
    <property type="project" value="TreeGrafter"/>
</dbReference>
<dbReference type="CDD" id="cd00148">
    <property type="entry name" value="PROF"/>
    <property type="match status" value="1"/>
</dbReference>
<dbReference type="FunFam" id="3.30.450.30:FF:000001">
    <property type="entry name" value="Profilin"/>
    <property type="match status" value="1"/>
</dbReference>
<dbReference type="Gene3D" id="3.30.450.30">
    <property type="entry name" value="Dynein light chain 2a, cytoplasmic"/>
    <property type="match status" value="1"/>
</dbReference>
<dbReference type="InterPro" id="IPR048278">
    <property type="entry name" value="PFN"/>
</dbReference>
<dbReference type="InterPro" id="IPR005455">
    <property type="entry name" value="PFN_euk"/>
</dbReference>
<dbReference type="InterPro" id="IPR036140">
    <property type="entry name" value="PFN_sf"/>
</dbReference>
<dbReference type="InterPro" id="IPR027310">
    <property type="entry name" value="Profilin_CS"/>
</dbReference>
<dbReference type="PANTHER" id="PTHR11604">
    <property type="entry name" value="PROFILIN"/>
    <property type="match status" value="1"/>
</dbReference>
<dbReference type="PANTHER" id="PTHR11604:SF25">
    <property type="entry name" value="PROFILIN-5"/>
    <property type="match status" value="1"/>
</dbReference>
<dbReference type="Pfam" id="PF00235">
    <property type="entry name" value="Profilin"/>
    <property type="match status" value="1"/>
</dbReference>
<dbReference type="PRINTS" id="PR00392">
    <property type="entry name" value="PROFILIN"/>
</dbReference>
<dbReference type="PRINTS" id="PR01640">
    <property type="entry name" value="PROFILINPLNT"/>
</dbReference>
<dbReference type="SMART" id="SM00392">
    <property type="entry name" value="PROF"/>
    <property type="match status" value="1"/>
</dbReference>
<dbReference type="SUPFAM" id="SSF55770">
    <property type="entry name" value="Profilin (actin-binding protein)"/>
    <property type="match status" value="1"/>
</dbReference>
<dbReference type="PROSITE" id="PS00414">
    <property type="entry name" value="PROFILIN"/>
    <property type="match status" value="1"/>
</dbReference>
<comment type="function">
    <text evidence="1">Binds to actin and affects the structure of the cytoskeleton. At high concentrations, profilin prevents the polymerization of actin, whereas it enhances it at low concentrations (By similarity).</text>
</comment>
<comment type="subunit">
    <text evidence="1">Occurs in many kinds of cells as a complex with monomeric actin in a 1:1 ratio.</text>
</comment>
<comment type="subcellular location">
    <subcellularLocation>
        <location evidence="1">Cytoplasm</location>
        <location evidence="1">Cytoskeleton</location>
    </subcellularLocation>
</comment>
<comment type="PTM">
    <text evidence="1">Phosphorylated by MAP kinases.</text>
</comment>
<comment type="polymorphism">
    <text>Several isoforms of the allergen exist due to polymorphism.</text>
</comment>
<comment type="allergen">
    <text>Causes an allergic reaction in human.</text>
</comment>
<comment type="miscellaneous">
    <text evidence="3">The variability of the residues taking part of IgE-binding epitopes might be responsible of the difference in cross-reactivity among olive pollen cultivars, and between distantly related pollen species, leading to a variable range of allergy reactions among atopic patients.</text>
</comment>
<comment type="similarity">
    <text evidence="2">Belongs to the profilin family.</text>
</comment>
<feature type="initiator methionine" description="Removed" evidence="1">
    <location>
        <position position="1"/>
    </location>
</feature>
<feature type="chain" id="PRO_0000425027" description="Profilin-2">
    <location>
        <begin position="2"/>
        <end position="134"/>
    </location>
</feature>
<feature type="short sequence motif" description="Involved in PIP2 interaction">
    <location>
        <begin position="84"/>
        <end position="100"/>
    </location>
</feature>
<feature type="modified residue" description="Phosphothreonine" evidence="1">
    <location>
        <position position="114"/>
    </location>
</feature>
<feature type="disulfide bond" evidence="3">
    <location>
        <begin position="13"/>
        <end position="118"/>
    </location>
</feature>
<reference key="1">
    <citation type="journal article" date="2012" name="PLoS ONE">
        <title>Characterization of profilin polymorphism in pollen with a focus on multifunctionality.</title>
        <authorList>
            <person name="Jimenez-Lopez J.C."/>
            <person name="Morales S."/>
            <person name="Castro A.J."/>
            <person name="Volkmann D."/>
            <person name="Rodriguez-Garcia M.I."/>
            <person name="Alche Jde D."/>
        </authorList>
    </citation>
    <scope>NUCLEOTIDE SEQUENCE [MRNA]</scope>
    <scope>POLYMORPHISM</scope>
    <source>
        <strain>cv. Verdial de Velez-Malaga</strain>
    </source>
</reference>
<reference key="2">
    <citation type="journal article" date="2013" name="PLoS ONE">
        <title>Analysis of the effects of polymorphism on pollen profilin structural functionality and the generation of conformational, T- and B-cell epitopes.</title>
        <authorList>
            <person name="Jimenez-Lopez J.C."/>
            <person name="Rodriguez-Garcia M.I."/>
            <person name="Alche J.D."/>
        </authorList>
    </citation>
    <scope>3D-STRUCTURE MODELING</scope>
    <scope>DISULFIDE BOND</scope>
</reference>
<protein>
    <recommendedName>
        <fullName>Profilin-2</fullName>
    </recommendedName>
    <alternativeName>
        <fullName>Pollen allergen Ole e 2</fullName>
    </alternativeName>
    <allergenName>Ole e 2</allergenName>
</protein>
<keyword id="KW-0009">Actin-binding</keyword>
<keyword id="KW-0020">Allergen</keyword>
<keyword id="KW-0963">Cytoplasm</keyword>
<keyword id="KW-0206">Cytoskeleton</keyword>
<keyword id="KW-1015">Disulfide bond</keyword>
<keyword id="KW-0597">Phosphoprotein</keyword>